<keyword id="KW-0665">Pyrimidine biosynthesis</keyword>
<keyword id="KW-1185">Reference proteome</keyword>
<keyword id="KW-0808">Transferase</keyword>
<accession>Q8KBI7</accession>
<dbReference type="EC" id="2.1.3.2" evidence="1"/>
<dbReference type="EMBL" id="AE006470">
    <property type="protein sequence ID" value="AAM73021.1"/>
    <property type="molecule type" value="Genomic_DNA"/>
</dbReference>
<dbReference type="RefSeq" id="NP_662679.1">
    <property type="nucleotide sequence ID" value="NC_002932.3"/>
</dbReference>
<dbReference type="RefSeq" id="WP_010933460.1">
    <property type="nucleotide sequence ID" value="NC_002932.3"/>
</dbReference>
<dbReference type="SMR" id="Q8KBI7"/>
<dbReference type="STRING" id="194439.CT1800"/>
<dbReference type="EnsemblBacteria" id="AAM73021">
    <property type="protein sequence ID" value="AAM73021"/>
    <property type="gene ID" value="CT1800"/>
</dbReference>
<dbReference type="KEGG" id="cte:CT1800"/>
<dbReference type="PATRIC" id="fig|194439.7.peg.1634"/>
<dbReference type="eggNOG" id="COG0540">
    <property type="taxonomic scope" value="Bacteria"/>
</dbReference>
<dbReference type="HOGENOM" id="CLU_043846_2_0_10"/>
<dbReference type="OrthoDB" id="9774690at2"/>
<dbReference type="UniPathway" id="UPA00070">
    <property type="reaction ID" value="UER00116"/>
</dbReference>
<dbReference type="Proteomes" id="UP000001007">
    <property type="component" value="Chromosome"/>
</dbReference>
<dbReference type="GO" id="GO:0005829">
    <property type="term" value="C:cytosol"/>
    <property type="evidence" value="ECO:0007669"/>
    <property type="project" value="TreeGrafter"/>
</dbReference>
<dbReference type="GO" id="GO:0016597">
    <property type="term" value="F:amino acid binding"/>
    <property type="evidence" value="ECO:0007669"/>
    <property type="project" value="InterPro"/>
</dbReference>
<dbReference type="GO" id="GO:0004070">
    <property type="term" value="F:aspartate carbamoyltransferase activity"/>
    <property type="evidence" value="ECO:0007669"/>
    <property type="project" value="UniProtKB-UniRule"/>
</dbReference>
<dbReference type="GO" id="GO:0006207">
    <property type="term" value="P:'de novo' pyrimidine nucleobase biosynthetic process"/>
    <property type="evidence" value="ECO:0007669"/>
    <property type="project" value="InterPro"/>
</dbReference>
<dbReference type="GO" id="GO:0044205">
    <property type="term" value="P:'de novo' UMP biosynthetic process"/>
    <property type="evidence" value="ECO:0007669"/>
    <property type="project" value="UniProtKB-UniRule"/>
</dbReference>
<dbReference type="GO" id="GO:0006520">
    <property type="term" value="P:amino acid metabolic process"/>
    <property type="evidence" value="ECO:0007669"/>
    <property type="project" value="InterPro"/>
</dbReference>
<dbReference type="Gene3D" id="3.40.50.1370">
    <property type="entry name" value="Aspartate/ornithine carbamoyltransferase"/>
    <property type="match status" value="2"/>
</dbReference>
<dbReference type="HAMAP" id="MF_00001">
    <property type="entry name" value="Asp_carb_tr"/>
    <property type="match status" value="1"/>
</dbReference>
<dbReference type="InterPro" id="IPR006132">
    <property type="entry name" value="Asp/Orn_carbamoyltranf_P-bd"/>
</dbReference>
<dbReference type="InterPro" id="IPR006130">
    <property type="entry name" value="Asp/Orn_carbamoylTrfase"/>
</dbReference>
<dbReference type="InterPro" id="IPR036901">
    <property type="entry name" value="Asp/Orn_carbamoylTrfase_sf"/>
</dbReference>
<dbReference type="InterPro" id="IPR002082">
    <property type="entry name" value="Asp_carbamoyltransf"/>
</dbReference>
<dbReference type="InterPro" id="IPR006131">
    <property type="entry name" value="Asp_carbamoyltransf_Asp/Orn-bd"/>
</dbReference>
<dbReference type="NCBIfam" id="TIGR00670">
    <property type="entry name" value="asp_carb_tr"/>
    <property type="match status" value="1"/>
</dbReference>
<dbReference type="NCBIfam" id="NF002032">
    <property type="entry name" value="PRK00856.1"/>
    <property type="match status" value="1"/>
</dbReference>
<dbReference type="PANTHER" id="PTHR45753:SF6">
    <property type="entry name" value="ASPARTATE CARBAMOYLTRANSFERASE"/>
    <property type="match status" value="1"/>
</dbReference>
<dbReference type="PANTHER" id="PTHR45753">
    <property type="entry name" value="ORNITHINE CARBAMOYLTRANSFERASE, MITOCHONDRIAL"/>
    <property type="match status" value="1"/>
</dbReference>
<dbReference type="Pfam" id="PF00185">
    <property type="entry name" value="OTCace"/>
    <property type="match status" value="1"/>
</dbReference>
<dbReference type="Pfam" id="PF02729">
    <property type="entry name" value="OTCace_N"/>
    <property type="match status" value="1"/>
</dbReference>
<dbReference type="PRINTS" id="PR00100">
    <property type="entry name" value="AOTCASE"/>
</dbReference>
<dbReference type="PRINTS" id="PR00101">
    <property type="entry name" value="ATCASE"/>
</dbReference>
<dbReference type="SUPFAM" id="SSF53671">
    <property type="entry name" value="Aspartate/ornithine carbamoyltransferase"/>
    <property type="match status" value="1"/>
</dbReference>
<dbReference type="PROSITE" id="PS00097">
    <property type="entry name" value="CARBAMOYLTRANSFERASE"/>
    <property type="match status" value="1"/>
</dbReference>
<organism>
    <name type="scientific">Chlorobaculum tepidum (strain ATCC 49652 / DSM 12025 / NBRC 103806 / TLS)</name>
    <name type="common">Chlorobium tepidum</name>
    <dbReference type="NCBI Taxonomy" id="194439"/>
    <lineage>
        <taxon>Bacteria</taxon>
        <taxon>Pseudomonadati</taxon>
        <taxon>Chlorobiota</taxon>
        <taxon>Chlorobiia</taxon>
        <taxon>Chlorobiales</taxon>
        <taxon>Chlorobiaceae</taxon>
        <taxon>Chlorobaculum</taxon>
    </lineage>
</organism>
<feature type="chain" id="PRO_0000113117" description="Aspartate carbamoyltransferase catalytic subunit">
    <location>
        <begin position="1"/>
        <end position="308"/>
    </location>
</feature>
<feature type="binding site" evidence="1">
    <location>
        <position position="55"/>
    </location>
    <ligand>
        <name>carbamoyl phosphate</name>
        <dbReference type="ChEBI" id="CHEBI:58228"/>
    </ligand>
</feature>
<feature type="binding site" evidence="1">
    <location>
        <position position="56"/>
    </location>
    <ligand>
        <name>carbamoyl phosphate</name>
        <dbReference type="ChEBI" id="CHEBI:58228"/>
    </ligand>
</feature>
<feature type="binding site" evidence="1">
    <location>
        <position position="83"/>
    </location>
    <ligand>
        <name>L-aspartate</name>
        <dbReference type="ChEBI" id="CHEBI:29991"/>
    </ligand>
</feature>
<feature type="binding site" evidence="1">
    <location>
        <position position="105"/>
    </location>
    <ligand>
        <name>carbamoyl phosphate</name>
        <dbReference type="ChEBI" id="CHEBI:58228"/>
    </ligand>
</feature>
<feature type="binding site" evidence="1">
    <location>
        <position position="133"/>
    </location>
    <ligand>
        <name>carbamoyl phosphate</name>
        <dbReference type="ChEBI" id="CHEBI:58228"/>
    </ligand>
</feature>
<feature type="binding site" evidence="1">
    <location>
        <position position="136"/>
    </location>
    <ligand>
        <name>carbamoyl phosphate</name>
        <dbReference type="ChEBI" id="CHEBI:58228"/>
    </ligand>
</feature>
<feature type="binding site" evidence="1">
    <location>
        <position position="166"/>
    </location>
    <ligand>
        <name>L-aspartate</name>
        <dbReference type="ChEBI" id="CHEBI:29991"/>
    </ligand>
</feature>
<feature type="binding site" evidence="1">
    <location>
        <position position="220"/>
    </location>
    <ligand>
        <name>L-aspartate</name>
        <dbReference type="ChEBI" id="CHEBI:29991"/>
    </ligand>
</feature>
<feature type="binding site" evidence="1">
    <location>
        <position position="261"/>
    </location>
    <ligand>
        <name>carbamoyl phosphate</name>
        <dbReference type="ChEBI" id="CHEBI:58228"/>
    </ligand>
</feature>
<feature type="binding site" evidence="1">
    <location>
        <position position="262"/>
    </location>
    <ligand>
        <name>carbamoyl phosphate</name>
        <dbReference type="ChEBI" id="CHEBI:58228"/>
    </ligand>
</feature>
<name>PYRB_CHLTE</name>
<proteinExistence type="inferred from homology"/>
<sequence length="308" mass="33539">MNHLTGLFGLPASTLVELLDLATGYREGLNREPETFAPLLSNRRIALVFFENSTRTRFSFELAARHLGAGTLSFTAASSSVSKGETLSDTIRNLEAMKVDAFVLRHPSSGAAEFVASITKRPVINAGDGTHEHPTQALLDLLTLREYFGKIEGLKIMILGDILHSRVARSNIIGLKTLGAEIAVCAPTTLLPGRIDQLGVRVFTGIDEALAWADAAIVLRLQLERATGGYIPSLEEYSASYGLTDEKLDRLKRLMPVLHPGPINREIEISNLVADRIQPPGYSSSMLMEQVTNGVAVRMAVLHRLLAK</sequence>
<protein>
    <recommendedName>
        <fullName evidence="1">Aspartate carbamoyltransferase catalytic subunit</fullName>
        <ecNumber evidence="1">2.1.3.2</ecNumber>
    </recommendedName>
    <alternativeName>
        <fullName evidence="1">Aspartate transcarbamylase</fullName>
        <shortName evidence="1">ATCase</shortName>
    </alternativeName>
</protein>
<gene>
    <name evidence="1" type="primary">pyrB</name>
    <name type="ordered locus">CT1800</name>
</gene>
<evidence type="ECO:0000255" key="1">
    <source>
        <dbReference type="HAMAP-Rule" id="MF_00001"/>
    </source>
</evidence>
<reference key="1">
    <citation type="journal article" date="2002" name="Proc. Natl. Acad. Sci. U.S.A.">
        <title>The complete genome sequence of Chlorobium tepidum TLS, a photosynthetic, anaerobic, green-sulfur bacterium.</title>
        <authorList>
            <person name="Eisen J.A."/>
            <person name="Nelson K.E."/>
            <person name="Paulsen I.T."/>
            <person name="Heidelberg J.F."/>
            <person name="Wu M."/>
            <person name="Dodson R.J."/>
            <person name="DeBoy R.T."/>
            <person name="Gwinn M.L."/>
            <person name="Nelson W.C."/>
            <person name="Haft D.H."/>
            <person name="Hickey E.K."/>
            <person name="Peterson J.D."/>
            <person name="Durkin A.S."/>
            <person name="Kolonay J.F."/>
            <person name="Yang F."/>
            <person name="Holt I.E."/>
            <person name="Umayam L.A."/>
            <person name="Mason T.M."/>
            <person name="Brenner M."/>
            <person name="Shea T.P."/>
            <person name="Parksey D.S."/>
            <person name="Nierman W.C."/>
            <person name="Feldblyum T.V."/>
            <person name="Hansen C.L."/>
            <person name="Craven M.B."/>
            <person name="Radune D."/>
            <person name="Vamathevan J.J."/>
            <person name="Khouri H.M."/>
            <person name="White O."/>
            <person name="Gruber T.M."/>
            <person name="Ketchum K.A."/>
            <person name="Venter J.C."/>
            <person name="Tettelin H."/>
            <person name="Bryant D.A."/>
            <person name="Fraser C.M."/>
        </authorList>
    </citation>
    <scope>NUCLEOTIDE SEQUENCE [LARGE SCALE GENOMIC DNA]</scope>
    <source>
        <strain>ATCC 49652 / DSM 12025 / NBRC 103806 / TLS</strain>
    </source>
</reference>
<comment type="function">
    <text evidence="1">Catalyzes the condensation of carbamoyl phosphate and aspartate to form carbamoyl aspartate and inorganic phosphate, the committed step in the de novo pyrimidine nucleotide biosynthesis pathway.</text>
</comment>
<comment type="catalytic activity">
    <reaction evidence="1">
        <text>carbamoyl phosphate + L-aspartate = N-carbamoyl-L-aspartate + phosphate + H(+)</text>
        <dbReference type="Rhea" id="RHEA:20013"/>
        <dbReference type="ChEBI" id="CHEBI:15378"/>
        <dbReference type="ChEBI" id="CHEBI:29991"/>
        <dbReference type="ChEBI" id="CHEBI:32814"/>
        <dbReference type="ChEBI" id="CHEBI:43474"/>
        <dbReference type="ChEBI" id="CHEBI:58228"/>
        <dbReference type="EC" id="2.1.3.2"/>
    </reaction>
</comment>
<comment type="pathway">
    <text evidence="1">Pyrimidine metabolism; UMP biosynthesis via de novo pathway; (S)-dihydroorotate from bicarbonate: step 2/3.</text>
</comment>
<comment type="subunit">
    <text evidence="1">Heterododecamer (2C3:3R2) of six catalytic PyrB chains organized as two trimers (C3), and six regulatory PyrI chains organized as three dimers (R2).</text>
</comment>
<comment type="similarity">
    <text evidence="1">Belongs to the aspartate/ornithine carbamoyltransferase superfamily. ATCase family.</text>
</comment>